<feature type="chain" id="PRO_0000052073" description="Cytochrome P450 71A23">
    <location>
        <begin position="1"/>
        <end position="483"/>
    </location>
</feature>
<feature type="transmembrane region" description="Helical" evidence="2">
    <location>
        <begin position="1"/>
        <end position="21"/>
    </location>
</feature>
<feature type="binding site" description="axial binding residue" evidence="1">
    <location>
        <position position="429"/>
    </location>
    <ligand>
        <name>heme</name>
        <dbReference type="ChEBI" id="CHEBI:30413"/>
    </ligand>
    <ligandPart>
        <name>Fe</name>
        <dbReference type="ChEBI" id="CHEBI:18248"/>
    </ligandPart>
</feature>
<accession>Q9STL0</accession>
<accession>Q304B2</accession>
<reference key="1">
    <citation type="journal article" date="2000" name="Nature">
        <title>Sequence and analysis of chromosome 3 of the plant Arabidopsis thaliana.</title>
        <authorList>
            <person name="Salanoubat M."/>
            <person name="Lemcke K."/>
            <person name="Rieger M."/>
            <person name="Ansorge W."/>
            <person name="Unseld M."/>
            <person name="Fartmann B."/>
            <person name="Valle G."/>
            <person name="Bloecker H."/>
            <person name="Perez-Alonso M."/>
            <person name="Obermaier B."/>
            <person name="Delseny M."/>
            <person name="Boutry M."/>
            <person name="Grivell L.A."/>
            <person name="Mache R."/>
            <person name="Puigdomenech P."/>
            <person name="De Simone V."/>
            <person name="Choisne N."/>
            <person name="Artiguenave F."/>
            <person name="Robert C."/>
            <person name="Brottier P."/>
            <person name="Wincker P."/>
            <person name="Cattolico L."/>
            <person name="Weissenbach J."/>
            <person name="Saurin W."/>
            <person name="Quetier F."/>
            <person name="Schaefer M."/>
            <person name="Mueller-Auer S."/>
            <person name="Gabel C."/>
            <person name="Fuchs M."/>
            <person name="Benes V."/>
            <person name="Wurmbach E."/>
            <person name="Drzonek H."/>
            <person name="Erfle H."/>
            <person name="Jordan N."/>
            <person name="Bangert S."/>
            <person name="Wiedelmann R."/>
            <person name="Kranz H."/>
            <person name="Voss H."/>
            <person name="Holland R."/>
            <person name="Brandt P."/>
            <person name="Nyakatura G."/>
            <person name="Vezzi A."/>
            <person name="D'Angelo M."/>
            <person name="Pallavicini A."/>
            <person name="Toppo S."/>
            <person name="Simionati B."/>
            <person name="Conrad A."/>
            <person name="Hornischer K."/>
            <person name="Kauer G."/>
            <person name="Loehnert T.-H."/>
            <person name="Nordsiek G."/>
            <person name="Reichelt J."/>
            <person name="Scharfe M."/>
            <person name="Schoen O."/>
            <person name="Bargues M."/>
            <person name="Terol J."/>
            <person name="Climent J."/>
            <person name="Navarro P."/>
            <person name="Collado C."/>
            <person name="Perez-Perez A."/>
            <person name="Ottenwaelder B."/>
            <person name="Duchemin D."/>
            <person name="Cooke R."/>
            <person name="Laudie M."/>
            <person name="Berger-Llauro C."/>
            <person name="Purnelle B."/>
            <person name="Masuy D."/>
            <person name="de Haan M."/>
            <person name="Maarse A.C."/>
            <person name="Alcaraz J.-P."/>
            <person name="Cottet A."/>
            <person name="Casacuberta E."/>
            <person name="Monfort A."/>
            <person name="Argiriou A."/>
            <person name="Flores M."/>
            <person name="Liguori R."/>
            <person name="Vitale D."/>
            <person name="Mannhaupt G."/>
            <person name="Haase D."/>
            <person name="Schoof H."/>
            <person name="Rudd S."/>
            <person name="Zaccaria P."/>
            <person name="Mewes H.-W."/>
            <person name="Mayer K.F.X."/>
            <person name="Kaul S."/>
            <person name="Town C.D."/>
            <person name="Koo H.L."/>
            <person name="Tallon L.J."/>
            <person name="Jenkins J."/>
            <person name="Rooney T."/>
            <person name="Rizzo M."/>
            <person name="Walts A."/>
            <person name="Utterback T."/>
            <person name="Fujii C.Y."/>
            <person name="Shea T.P."/>
            <person name="Creasy T.H."/>
            <person name="Haas B."/>
            <person name="Maiti R."/>
            <person name="Wu D."/>
            <person name="Peterson J."/>
            <person name="Van Aken S."/>
            <person name="Pai G."/>
            <person name="Militscher J."/>
            <person name="Sellers P."/>
            <person name="Gill J.E."/>
            <person name="Feldblyum T.V."/>
            <person name="Preuss D."/>
            <person name="Lin X."/>
            <person name="Nierman W.C."/>
            <person name="Salzberg S.L."/>
            <person name="White O."/>
            <person name="Venter J.C."/>
            <person name="Fraser C.M."/>
            <person name="Kaneko T."/>
            <person name="Nakamura Y."/>
            <person name="Sato S."/>
            <person name="Kato T."/>
            <person name="Asamizu E."/>
            <person name="Sasamoto S."/>
            <person name="Kimura T."/>
            <person name="Idesawa K."/>
            <person name="Kawashima K."/>
            <person name="Kishida Y."/>
            <person name="Kiyokawa C."/>
            <person name="Kohara M."/>
            <person name="Matsumoto M."/>
            <person name="Matsuno A."/>
            <person name="Muraki A."/>
            <person name="Nakayama S."/>
            <person name="Nakazaki N."/>
            <person name="Shinpo S."/>
            <person name="Takeuchi C."/>
            <person name="Wada T."/>
            <person name="Watanabe A."/>
            <person name="Yamada M."/>
            <person name="Yasuda M."/>
            <person name="Tabata S."/>
        </authorList>
    </citation>
    <scope>NUCLEOTIDE SEQUENCE [LARGE SCALE GENOMIC DNA]</scope>
    <source>
        <strain>cv. Columbia</strain>
    </source>
</reference>
<reference key="2">
    <citation type="journal article" date="2017" name="Plant J.">
        <title>Araport11: a complete reannotation of the Arabidopsis thaliana reference genome.</title>
        <authorList>
            <person name="Cheng C.Y."/>
            <person name="Krishnakumar V."/>
            <person name="Chan A.P."/>
            <person name="Thibaud-Nissen F."/>
            <person name="Schobel S."/>
            <person name="Town C.D."/>
        </authorList>
    </citation>
    <scope>GENOME REANNOTATION</scope>
    <source>
        <strain>cv. Columbia</strain>
    </source>
</reference>
<comment type="cofactor">
    <cofactor evidence="1">
        <name>heme</name>
        <dbReference type="ChEBI" id="CHEBI:30413"/>
    </cofactor>
</comment>
<comment type="subcellular location">
    <subcellularLocation>
        <location evidence="3">Membrane</location>
        <topology evidence="3">Single-pass membrane protein</topology>
    </subcellularLocation>
</comment>
<comment type="similarity">
    <text evidence="3">Belongs to the cytochrome P450 family.</text>
</comment>
<proteinExistence type="evidence at transcript level"/>
<organism>
    <name type="scientific">Arabidopsis thaliana</name>
    <name type="common">Mouse-ear cress</name>
    <dbReference type="NCBI Taxonomy" id="3702"/>
    <lineage>
        <taxon>Eukaryota</taxon>
        <taxon>Viridiplantae</taxon>
        <taxon>Streptophyta</taxon>
        <taxon>Embryophyta</taxon>
        <taxon>Tracheophyta</taxon>
        <taxon>Spermatophyta</taxon>
        <taxon>Magnoliopsida</taxon>
        <taxon>eudicotyledons</taxon>
        <taxon>Gunneridae</taxon>
        <taxon>Pentapetalae</taxon>
        <taxon>rosids</taxon>
        <taxon>malvids</taxon>
        <taxon>Brassicales</taxon>
        <taxon>Brassicaceae</taxon>
        <taxon>Camelineae</taxon>
        <taxon>Arabidopsis</taxon>
    </lineage>
</organism>
<protein>
    <recommendedName>
        <fullName>Cytochrome P450 71A23</fullName>
        <ecNumber>1.14.-.-</ecNumber>
    </recommendedName>
</protein>
<keyword id="KW-0349">Heme</keyword>
<keyword id="KW-0408">Iron</keyword>
<keyword id="KW-0472">Membrane</keyword>
<keyword id="KW-0479">Metal-binding</keyword>
<keyword id="KW-0503">Monooxygenase</keyword>
<keyword id="KW-0560">Oxidoreductase</keyword>
<keyword id="KW-1185">Reference proteome</keyword>
<keyword id="KW-0812">Transmembrane</keyword>
<keyword id="KW-1133">Transmembrane helix</keyword>
<dbReference type="EC" id="1.14.-.-"/>
<dbReference type="EMBL" id="AL049659">
    <property type="protein sequence ID" value="CAB41168.1"/>
    <property type="molecule type" value="Genomic_DNA"/>
</dbReference>
<dbReference type="EMBL" id="CP002686">
    <property type="protein sequence ID" value="AEE78397.1"/>
    <property type="molecule type" value="Genomic_DNA"/>
</dbReference>
<dbReference type="PIR" id="T06712">
    <property type="entry name" value="T06712"/>
</dbReference>
<dbReference type="RefSeq" id="NP_680109.2">
    <property type="nucleotide sequence ID" value="NM_148856.3"/>
</dbReference>
<dbReference type="SMR" id="Q9STL0"/>
<dbReference type="FunCoup" id="Q9STL0">
    <property type="interactions" value="244"/>
</dbReference>
<dbReference type="STRING" id="3702.Q9STL0"/>
<dbReference type="PaxDb" id="3702-AT3G48300.1"/>
<dbReference type="ProteomicsDB" id="240450"/>
<dbReference type="EnsemblPlants" id="AT3G48300.1">
    <property type="protein sequence ID" value="AT3G48300.1"/>
    <property type="gene ID" value="AT3G48300"/>
</dbReference>
<dbReference type="GeneID" id="823988"/>
<dbReference type="Gramene" id="AT3G48300.1">
    <property type="protein sequence ID" value="AT3G48300.1"/>
    <property type="gene ID" value="AT3G48300"/>
</dbReference>
<dbReference type="KEGG" id="ath:AT3G48300"/>
<dbReference type="Araport" id="AT3G48300"/>
<dbReference type="TAIR" id="AT3G48300">
    <property type="gene designation" value="CYP71A23"/>
</dbReference>
<dbReference type="eggNOG" id="KOG0156">
    <property type="taxonomic scope" value="Eukaryota"/>
</dbReference>
<dbReference type="HOGENOM" id="CLU_001570_4_1_1"/>
<dbReference type="InParanoid" id="Q9STL0"/>
<dbReference type="PhylomeDB" id="Q9STL0"/>
<dbReference type="PRO" id="PR:Q9STL0"/>
<dbReference type="Proteomes" id="UP000006548">
    <property type="component" value="Chromosome 3"/>
</dbReference>
<dbReference type="ExpressionAtlas" id="Q9STL0">
    <property type="expression patterns" value="baseline and differential"/>
</dbReference>
<dbReference type="GO" id="GO:0016020">
    <property type="term" value="C:membrane"/>
    <property type="evidence" value="ECO:0007669"/>
    <property type="project" value="UniProtKB-SubCell"/>
</dbReference>
<dbReference type="GO" id="GO:0020037">
    <property type="term" value="F:heme binding"/>
    <property type="evidence" value="ECO:0007669"/>
    <property type="project" value="InterPro"/>
</dbReference>
<dbReference type="GO" id="GO:0005506">
    <property type="term" value="F:iron ion binding"/>
    <property type="evidence" value="ECO:0007669"/>
    <property type="project" value="InterPro"/>
</dbReference>
<dbReference type="GO" id="GO:0004497">
    <property type="term" value="F:monooxygenase activity"/>
    <property type="evidence" value="ECO:0007669"/>
    <property type="project" value="UniProtKB-KW"/>
</dbReference>
<dbReference type="GO" id="GO:0016705">
    <property type="term" value="F:oxidoreductase activity, acting on paired donors, with incorporation or reduction of molecular oxygen"/>
    <property type="evidence" value="ECO:0007669"/>
    <property type="project" value="InterPro"/>
</dbReference>
<dbReference type="CDD" id="cd11072">
    <property type="entry name" value="CYP71-like"/>
    <property type="match status" value="1"/>
</dbReference>
<dbReference type="FunFam" id="1.10.630.10:FF:000011">
    <property type="entry name" value="Cytochrome P450 83B1"/>
    <property type="match status" value="1"/>
</dbReference>
<dbReference type="Gene3D" id="1.10.630.10">
    <property type="entry name" value="Cytochrome P450"/>
    <property type="match status" value="1"/>
</dbReference>
<dbReference type="InterPro" id="IPR001128">
    <property type="entry name" value="Cyt_P450"/>
</dbReference>
<dbReference type="InterPro" id="IPR017972">
    <property type="entry name" value="Cyt_P450_CS"/>
</dbReference>
<dbReference type="InterPro" id="IPR002401">
    <property type="entry name" value="Cyt_P450_E_grp-I"/>
</dbReference>
<dbReference type="InterPro" id="IPR036396">
    <property type="entry name" value="Cyt_P450_sf"/>
</dbReference>
<dbReference type="PANTHER" id="PTHR47955:SF15">
    <property type="entry name" value="CYTOCHROME P450 71A2-LIKE"/>
    <property type="match status" value="1"/>
</dbReference>
<dbReference type="PANTHER" id="PTHR47955">
    <property type="entry name" value="CYTOCHROME P450 FAMILY 71 PROTEIN"/>
    <property type="match status" value="1"/>
</dbReference>
<dbReference type="Pfam" id="PF00067">
    <property type="entry name" value="p450"/>
    <property type="match status" value="1"/>
</dbReference>
<dbReference type="PRINTS" id="PR00463">
    <property type="entry name" value="EP450I"/>
</dbReference>
<dbReference type="PRINTS" id="PR00385">
    <property type="entry name" value="P450"/>
</dbReference>
<dbReference type="SUPFAM" id="SSF48264">
    <property type="entry name" value="Cytochrome P450"/>
    <property type="match status" value="1"/>
</dbReference>
<dbReference type="PROSITE" id="PS00086">
    <property type="entry name" value="CYTOCHROME_P450"/>
    <property type="match status" value="1"/>
</dbReference>
<gene>
    <name type="primary">CYP71A23</name>
    <name type="ordered locus">At3g48300</name>
    <name type="ORF">T29H11.180</name>
</gene>
<name>C71AN_ARATH</name>
<evidence type="ECO:0000250" key="1"/>
<evidence type="ECO:0000255" key="2"/>
<evidence type="ECO:0000305" key="3"/>
<sequence length="483" mass="54761">MILFLCLIILFIITILFFKKHKTVNKIINFPSPPRLPLIGNLHQLSQHPHRSLCYLSHRYGPLMLLHFGSVPVIVASTAEAARDVLKTHDRVFASRPRSKIFEKLLYKSRNMASAPYGEYWRQMKSVSVLHLLSNKMVRSFQDVRQEEITLMMETIRKSSSKPVNLSKILSSLTNDVICRVALGRKYGVGTDFKELIDRLMRQLGTFTIGSYVPWLAWTDWVSGLEARLEKTANDFDKLLERIVQDHEDGDGDKTDFVDVLLAAQRDKSFGFDIDRLSIKAIVLDAFVGGTDTSSTLVEWEMTELLRHPTCLKKLQEEVRTICKGKSSVSEDDIQGMEYLKAVVKEALRLHPPVPLMVPHQSTQDVRLRDNHIPAGTQVIVNLWAVGREAATWGPDANEFRPERHLESPSDFRGQDFELIPFGAGRRMCPGISFAVVLNEVVLANLVHGFDWQSIDDETDVAESIGSVIRRMHPLYVIPSSTT</sequence>